<reference key="1">
    <citation type="journal article" date="2000" name="Nature">
        <title>Sequence and analysis of chromosome 1 of the plant Arabidopsis thaliana.</title>
        <authorList>
            <person name="Theologis A."/>
            <person name="Ecker J.R."/>
            <person name="Palm C.J."/>
            <person name="Federspiel N.A."/>
            <person name="Kaul S."/>
            <person name="White O."/>
            <person name="Alonso J."/>
            <person name="Altafi H."/>
            <person name="Araujo R."/>
            <person name="Bowman C.L."/>
            <person name="Brooks S.Y."/>
            <person name="Buehler E."/>
            <person name="Chan A."/>
            <person name="Chao Q."/>
            <person name="Chen H."/>
            <person name="Cheuk R.F."/>
            <person name="Chin C.W."/>
            <person name="Chung M.K."/>
            <person name="Conn L."/>
            <person name="Conway A.B."/>
            <person name="Conway A.R."/>
            <person name="Creasy T.H."/>
            <person name="Dewar K."/>
            <person name="Dunn P."/>
            <person name="Etgu P."/>
            <person name="Feldblyum T.V."/>
            <person name="Feng J.-D."/>
            <person name="Fong B."/>
            <person name="Fujii C.Y."/>
            <person name="Gill J.E."/>
            <person name="Goldsmith A.D."/>
            <person name="Haas B."/>
            <person name="Hansen N.F."/>
            <person name="Hughes B."/>
            <person name="Huizar L."/>
            <person name="Hunter J.L."/>
            <person name="Jenkins J."/>
            <person name="Johnson-Hopson C."/>
            <person name="Khan S."/>
            <person name="Khaykin E."/>
            <person name="Kim C.J."/>
            <person name="Koo H.L."/>
            <person name="Kremenetskaia I."/>
            <person name="Kurtz D.B."/>
            <person name="Kwan A."/>
            <person name="Lam B."/>
            <person name="Langin-Hooper S."/>
            <person name="Lee A."/>
            <person name="Lee J.M."/>
            <person name="Lenz C.A."/>
            <person name="Li J.H."/>
            <person name="Li Y.-P."/>
            <person name="Lin X."/>
            <person name="Liu S.X."/>
            <person name="Liu Z.A."/>
            <person name="Luros J.S."/>
            <person name="Maiti R."/>
            <person name="Marziali A."/>
            <person name="Militscher J."/>
            <person name="Miranda M."/>
            <person name="Nguyen M."/>
            <person name="Nierman W.C."/>
            <person name="Osborne B.I."/>
            <person name="Pai G."/>
            <person name="Peterson J."/>
            <person name="Pham P.K."/>
            <person name="Rizzo M."/>
            <person name="Rooney T."/>
            <person name="Rowley D."/>
            <person name="Sakano H."/>
            <person name="Salzberg S.L."/>
            <person name="Schwartz J.R."/>
            <person name="Shinn P."/>
            <person name="Southwick A.M."/>
            <person name="Sun H."/>
            <person name="Tallon L.J."/>
            <person name="Tambunga G."/>
            <person name="Toriumi M.J."/>
            <person name="Town C.D."/>
            <person name="Utterback T."/>
            <person name="Van Aken S."/>
            <person name="Vaysberg M."/>
            <person name="Vysotskaia V.S."/>
            <person name="Walker M."/>
            <person name="Wu D."/>
            <person name="Yu G."/>
            <person name="Fraser C.M."/>
            <person name="Venter J.C."/>
            <person name="Davis R.W."/>
        </authorList>
    </citation>
    <scope>NUCLEOTIDE SEQUENCE [LARGE SCALE GENOMIC DNA]</scope>
    <source>
        <strain>cv. Columbia</strain>
    </source>
</reference>
<reference key="2">
    <citation type="journal article" date="2017" name="Plant J.">
        <title>Araport11: a complete reannotation of the Arabidopsis thaliana reference genome.</title>
        <authorList>
            <person name="Cheng C.Y."/>
            <person name="Krishnakumar V."/>
            <person name="Chan A.P."/>
            <person name="Thibaud-Nissen F."/>
            <person name="Schobel S."/>
            <person name="Town C.D."/>
        </authorList>
    </citation>
    <scope>GENOME REANNOTATION</scope>
    <source>
        <strain>cv. Columbia</strain>
    </source>
</reference>
<reference key="3">
    <citation type="journal article" date="2007" name="Plant Physiol. Biochem.">
        <title>Differential expression of Arabidopsis sulfurtransferases under various growth conditions.</title>
        <authorList>
            <person name="Bartels A."/>
            <person name="Mock H.P."/>
            <person name="Papenbrock J."/>
        </authorList>
    </citation>
    <scope>GENE FAMILY</scope>
    <scope>NOMENCLATURE</scope>
</reference>
<gene>
    <name type="primary">STR8</name>
    <name type="ordered locus">At1g17850</name>
    <name type="ORF">F2H15.8</name>
</gene>
<accession>F4I933</accession>
<accession>Q9LMU3</accession>
<sequence>MRVSPAATLSVSLTTPLPITLTKARFSGEPLRLKQYVLSNQICSRPKHLLSEFKPTRRWTFSCKCRNRGRNGYAKFDDEGEDFIVVNFYRFVSIGDPEAEIEKHLSFLKDLNIRGRIYLNEQGINAQYSGPSKDALAYVEWLKGDDRFSDLLVQMSPAMNRHAFPKLKLQNKPSLVQYEGGISHLPLLDPPMRAKPLEPSEWKRKLKDLTDDDEASPSNSGKSYILLDVRNGYEWDVGHFRGAHRPEVDCFRNTSFGLSDEKEAPSDPLINVDKEKTDILMYCTGGIRCDVYSTVLRQRGFKNLYTLKGGVSHYLKEEGTAEWVGNLFVFDSRLSLPPAAYNDNVVDKAVGDNVVDEAGRTPQTPVDTSFARCYLCNSQVQELRHRNCANLDCNRLFLCCAECVVDLKGCCCSDCISAPRLRPVLHGVKRYEKWHVYRDSEEQNAPLV</sequence>
<comment type="subcellular location">
    <subcellularLocation>
        <location evidence="3">Plastid</location>
        <location evidence="3">Chloroplast</location>
    </subcellularLocation>
</comment>
<comment type="alternative products">
    <event type="alternative splicing"/>
    <isoform>
        <id>F4I933-1</id>
        <name>1</name>
        <sequence type="displayed"/>
    </isoform>
    <text>A number of isoforms are produced. According to EST sequences.</text>
</comment>
<comment type="sequence caution" evidence="3">
    <conflict type="erroneous gene model prediction">
        <sequence resource="EMBL-CDS" id="AAF97265"/>
    </conflict>
</comment>
<feature type="transit peptide" description="Chloroplast" evidence="1">
    <location>
        <begin position="1"/>
        <end position="23"/>
    </location>
</feature>
<feature type="chain" id="PRO_0000416530" description="Rhodanese-like domain-containing protein 8, chloroplastic">
    <location>
        <begin position="24"/>
        <end position="448"/>
    </location>
</feature>
<feature type="domain" description="Rhodanese" evidence="2">
    <location>
        <begin position="220"/>
        <end position="323"/>
    </location>
</feature>
<feature type="active site" description="Cysteine persulfide intermediate" evidence="2">
    <location>
        <position position="283"/>
    </location>
</feature>
<name>STR8_ARATH</name>
<organism>
    <name type="scientific">Arabidopsis thaliana</name>
    <name type="common">Mouse-ear cress</name>
    <dbReference type="NCBI Taxonomy" id="3702"/>
    <lineage>
        <taxon>Eukaryota</taxon>
        <taxon>Viridiplantae</taxon>
        <taxon>Streptophyta</taxon>
        <taxon>Embryophyta</taxon>
        <taxon>Tracheophyta</taxon>
        <taxon>Spermatophyta</taxon>
        <taxon>Magnoliopsida</taxon>
        <taxon>eudicotyledons</taxon>
        <taxon>Gunneridae</taxon>
        <taxon>Pentapetalae</taxon>
        <taxon>rosids</taxon>
        <taxon>malvids</taxon>
        <taxon>Brassicales</taxon>
        <taxon>Brassicaceae</taxon>
        <taxon>Camelineae</taxon>
        <taxon>Arabidopsis</taxon>
    </lineage>
</organism>
<protein>
    <recommendedName>
        <fullName>Rhodanese-like domain-containing protein 8, chloroplastic</fullName>
    </recommendedName>
    <alternativeName>
        <fullName>Sulfurtransferase 8</fullName>
        <shortName>AtStr8</shortName>
    </alternativeName>
</protein>
<keyword id="KW-0025">Alternative splicing</keyword>
<keyword id="KW-0150">Chloroplast</keyword>
<keyword id="KW-0934">Plastid</keyword>
<keyword id="KW-1185">Reference proteome</keyword>
<keyword id="KW-0809">Transit peptide</keyword>
<dbReference type="EMBL" id="AC034106">
    <property type="protein sequence ID" value="AAF97265.1"/>
    <property type="status" value="ALT_SEQ"/>
    <property type="molecule type" value="Genomic_DNA"/>
</dbReference>
<dbReference type="EMBL" id="CP002684">
    <property type="protein sequence ID" value="AEE29644.1"/>
    <property type="molecule type" value="Genomic_DNA"/>
</dbReference>
<dbReference type="PIR" id="F86313">
    <property type="entry name" value="F86313"/>
</dbReference>
<dbReference type="RefSeq" id="NP_001185025.1">
    <molecule id="F4I933-1"/>
    <property type="nucleotide sequence ID" value="NM_001198096.1"/>
</dbReference>
<dbReference type="SMR" id="F4I933"/>
<dbReference type="FunCoup" id="F4I933">
    <property type="interactions" value="516"/>
</dbReference>
<dbReference type="STRING" id="3702.F4I933"/>
<dbReference type="PaxDb" id="3702-AT1G17850.2"/>
<dbReference type="ProteomicsDB" id="228432">
    <molecule id="F4I933-1"/>
</dbReference>
<dbReference type="EnsemblPlants" id="AT1G17850.2">
    <molecule id="F4I933-1"/>
    <property type="protein sequence ID" value="AT1G17850.2"/>
    <property type="gene ID" value="AT1G17850"/>
</dbReference>
<dbReference type="GeneID" id="838364"/>
<dbReference type="Gramene" id="AT1G17850.2">
    <molecule id="F4I933-1"/>
    <property type="protein sequence ID" value="AT1G17850.2"/>
    <property type="gene ID" value="AT1G17850"/>
</dbReference>
<dbReference type="KEGG" id="ath:AT1G17850"/>
<dbReference type="Araport" id="AT1G17850"/>
<dbReference type="TAIR" id="AT1G17850"/>
<dbReference type="eggNOG" id="ENOG502QPZW">
    <property type="taxonomic scope" value="Eukaryota"/>
</dbReference>
<dbReference type="HOGENOM" id="CLU_038878_1_2_1"/>
<dbReference type="InParanoid" id="F4I933"/>
<dbReference type="OMA" id="ECKEKLW"/>
<dbReference type="PRO" id="PR:F4I933"/>
<dbReference type="Proteomes" id="UP000006548">
    <property type="component" value="Chromosome 1"/>
</dbReference>
<dbReference type="ExpressionAtlas" id="F4I933">
    <property type="expression patterns" value="baseline and differential"/>
</dbReference>
<dbReference type="GO" id="GO:0009507">
    <property type="term" value="C:chloroplast"/>
    <property type="evidence" value="ECO:0007669"/>
    <property type="project" value="UniProtKB-SubCell"/>
</dbReference>
<dbReference type="CDD" id="cd01518">
    <property type="entry name" value="RHOD_YceA"/>
    <property type="match status" value="1"/>
</dbReference>
<dbReference type="Gene3D" id="3.30.70.100">
    <property type="match status" value="1"/>
</dbReference>
<dbReference type="Gene3D" id="3.40.250.10">
    <property type="entry name" value="Rhodanese-like domain"/>
    <property type="match status" value="1"/>
</dbReference>
<dbReference type="InterPro" id="IPR001763">
    <property type="entry name" value="Rhodanese-like_dom"/>
</dbReference>
<dbReference type="InterPro" id="IPR036873">
    <property type="entry name" value="Rhodanese-like_dom_sf"/>
</dbReference>
<dbReference type="InterPro" id="IPR022111">
    <property type="entry name" value="Rhodanese_C"/>
</dbReference>
<dbReference type="InterPro" id="IPR020936">
    <property type="entry name" value="TrhO"/>
</dbReference>
<dbReference type="InterPro" id="IPR040503">
    <property type="entry name" value="TRHO_N"/>
</dbReference>
<dbReference type="PANTHER" id="PTHR43268:SF3">
    <property type="entry name" value="RHODANESE-LIKE DOMAIN-CONTAINING PROTEIN 7-RELATED"/>
    <property type="match status" value="1"/>
</dbReference>
<dbReference type="PANTHER" id="PTHR43268">
    <property type="entry name" value="THIOSULFATE SULFURTRANSFERASE/RHODANESE-LIKE DOMAIN-CONTAINING PROTEIN 2"/>
    <property type="match status" value="1"/>
</dbReference>
<dbReference type="Pfam" id="PF00581">
    <property type="entry name" value="Rhodanese"/>
    <property type="match status" value="1"/>
</dbReference>
<dbReference type="Pfam" id="PF12368">
    <property type="entry name" value="Rhodanese_C"/>
    <property type="match status" value="1"/>
</dbReference>
<dbReference type="Pfam" id="PF17773">
    <property type="entry name" value="UPF0176_N"/>
    <property type="match status" value="1"/>
</dbReference>
<dbReference type="SMART" id="SM00450">
    <property type="entry name" value="RHOD"/>
    <property type="match status" value="1"/>
</dbReference>
<dbReference type="SUPFAM" id="SSF52821">
    <property type="entry name" value="Rhodanese/Cell cycle control phosphatase"/>
    <property type="match status" value="1"/>
</dbReference>
<dbReference type="PROSITE" id="PS50206">
    <property type="entry name" value="RHODANESE_3"/>
    <property type="match status" value="1"/>
</dbReference>
<proteinExistence type="predicted"/>
<evidence type="ECO:0000255" key="1"/>
<evidence type="ECO:0000255" key="2">
    <source>
        <dbReference type="PROSITE-ProRule" id="PRU00173"/>
    </source>
</evidence>
<evidence type="ECO:0000305" key="3"/>